<name>ATPG_TOLAT</name>
<protein>
    <recommendedName>
        <fullName evidence="1">ATP synthase gamma chain</fullName>
    </recommendedName>
    <alternativeName>
        <fullName evidence="1">ATP synthase F1 sector gamma subunit</fullName>
    </alternativeName>
    <alternativeName>
        <fullName evidence="1">F-ATPase gamma subunit</fullName>
    </alternativeName>
</protein>
<organism>
    <name type="scientific">Tolumonas auensis (strain DSM 9187 / NBRC 110442 / TA 4)</name>
    <dbReference type="NCBI Taxonomy" id="595494"/>
    <lineage>
        <taxon>Bacteria</taxon>
        <taxon>Pseudomonadati</taxon>
        <taxon>Pseudomonadota</taxon>
        <taxon>Gammaproteobacteria</taxon>
        <taxon>Aeromonadales</taxon>
        <taxon>Aeromonadaceae</taxon>
        <taxon>Tolumonas</taxon>
    </lineage>
</organism>
<keyword id="KW-0066">ATP synthesis</keyword>
<keyword id="KW-0997">Cell inner membrane</keyword>
<keyword id="KW-1003">Cell membrane</keyword>
<keyword id="KW-0139">CF(1)</keyword>
<keyword id="KW-0375">Hydrogen ion transport</keyword>
<keyword id="KW-0406">Ion transport</keyword>
<keyword id="KW-0472">Membrane</keyword>
<keyword id="KW-1185">Reference proteome</keyword>
<keyword id="KW-0813">Transport</keyword>
<reference key="1">
    <citation type="submission" date="2009-05" db="EMBL/GenBank/DDBJ databases">
        <title>Complete sequence of Tolumonas auensis DSM 9187.</title>
        <authorList>
            <consortium name="US DOE Joint Genome Institute"/>
            <person name="Lucas S."/>
            <person name="Copeland A."/>
            <person name="Lapidus A."/>
            <person name="Glavina del Rio T."/>
            <person name="Tice H."/>
            <person name="Bruce D."/>
            <person name="Goodwin L."/>
            <person name="Pitluck S."/>
            <person name="Chertkov O."/>
            <person name="Brettin T."/>
            <person name="Detter J.C."/>
            <person name="Han C."/>
            <person name="Larimer F."/>
            <person name="Land M."/>
            <person name="Hauser L."/>
            <person name="Kyrpides N."/>
            <person name="Mikhailova N."/>
            <person name="Spring S."/>
            <person name="Beller H."/>
        </authorList>
    </citation>
    <scope>NUCLEOTIDE SEQUENCE [LARGE SCALE GENOMIC DNA]</scope>
    <source>
        <strain>DSM 9187 / NBRC 110442 / TA 4</strain>
    </source>
</reference>
<comment type="function">
    <text evidence="1">Produces ATP from ADP in the presence of a proton gradient across the membrane. The gamma chain is believed to be important in regulating ATPase activity and the flow of protons through the CF(0) complex.</text>
</comment>
<comment type="subunit">
    <text evidence="1">F-type ATPases have 2 components, CF(1) - the catalytic core - and CF(0) - the membrane proton channel. CF(1) has five subunits: alpha(3), beta(3), gamma(1), delta(1), epsilon(1). CF(0) has three main subunits: a, b and c.</text>
</comment>
<comment type="subcellular location">
    <subcellularLocation>
        <location evidence="1">Cell inner membrane</location>
        <topology evidence="1">Peripheral membrane protein</topology>
    </subcellularLocation>
</comment>
<comment type="similarity">
    <text evidence="1">Belongs to the ATPase gamma chain family.</text>
</comment>
<evidence type="ECO:0000255" key="1">
    <source>
        <dbReference type="HAMAP-Rule" id="MF_00815"/>
    </source>
</evidence>
<gene>
    <name evidence="1" type="primary">atpG</name>
    <name type="ordered locus">Tola_3134</name>
</gene>
<dbReference type="EMBL" id="CP001616">
    <property type="protein sequence ID" value="ACQ94722.1"/>
    <property type="molecule type" value="Genomic_DNA"/>
</dbReference>
<dbReference type="RefSeq" id="WP_015880171.1">
    <property type="nucleotide sequence ID" value="NC_012691.1"/>
</dbReference>
<dbReference type="SMR" id="C4LDW1"/>
<dbReference type="STRING" id="595494.Tola_3134"/>
<dbReference type="KEGG" id="tau:Tola_3134"/>
<dbReference type="eggNOG" id="COG0224">
    <property type="taxonomic scope" value="Bacteria"/>
</dbReference>
<dbReference type="HOGENOM" id="CLU_050669_0_1_6"/>
<dbReference type="OrthoDB" id="9812769at2"/>
<dbReference type="Proteomes" id="UP000009073">
    <property type="component" value="Chromosome"/>
</dbReference>
<dbReference type="GO" id="GO:0005886">
    <property type="term" value="C:plasma membrane"/>
    <property type="evidence" value="ECO:0007669"/>
    <property type="project" value="UniProtKB-SubCell"/>
</dbReference>
<dbReference type="GO" id="GO:0045259">
    <property type="term" value="C:proton-transporting ATP synthase complex"/>
    <property type="evidence" value="ECO:0007669"/>
    <property type="project" value="UniProtKB-KW"/>
</dbReference>
<dbReference type="GO" id="GO:0005524">
    <property type="term" value="F:ATP binding"/>
    <property type="evidence" value="ECO:0007669"/>
    <property type="project" value="UniProtKB-UniRule"/>
</dbReference>
<dbReference type="GO" id="GO:0046933">
    <property type="term" value="F:proton-transporting ATP synthase activity, rotational mechanism"/>
    <property type="evidence" value="ECO:0007669"/>
    <property type="project" value="UniProtKB-UniRule"/>
</dbReference>
<dbReference type="GO" id="GO:0042777">
    <property type="term" value="P:proton motive force-driven plasma membrane ATP synthesis"/>
    <property type="evidence" value="ECO:0007669"/>
    <property type="project" value="UniProtKB-UniRule"/>
</dbReference>
<dbReference type="CDD" id="cd12151">
    <property type="entry name" value="F1-ATPase_gamma"/>
    <property type="match status" value="1"/>
</dbReference>
<dbReference type="FunFam" id="1.10.287.80:FF:000005">
    <property type="entry name" value="ATP synthase gamma chain"/>
    <property type="match status" value="2"/>
</dbReference>
<dbReference type="FunFam" id="3.40.1380.10:FF:000001">
    <property type="entry name" value="ATP synthase gamma chain"/>
    <property type="match status" value="1"/>
</dbReference>
<dbReference type="Gene3D" id="3.40.1380.10">
    <property type="match status" value="1"/>
</dbReference>
<dbReference type="Gene3D" id="1.10.287.80">
    <property type="entry name" value="ATP synthase, gamma subunit, helix hairpin domain"/>
    <property type="match status" value="1"/>
</dbReference>
<dbReference type="HAMAP" id="MF_00815">
    <property type="entry name" value="ATP_synth_gamma_bact"/>
    <property type="match status" value="1"/>
</dbReference>
<dbReference type="InterPro" id="IPR035968">
    <property type="entry name" value="ATP_synth_F1_ATPase_gsu"/>
</dbReference>
<dbReference type="InterPro" id="IPR000131">
    <property type="entry name" value="ATP_synth_F1_gsu"/>
</dbReference>
<dbReference type="InterPro" id="IPR023632">
    <property type="entry name" value="ATP_synth_F1_gsu_CS"/>
</dbReference>
<dbReference type="NCBIfam" id="TIGR01146">
    <property type="entry name" value="ATPsyn_F1gamma"/>
    <property type="match status" value="1"/>
</dbReference>
<dbReference type="NCBIfam" id="NF004144">
    <property type="entry name" value="PRK05621.1-1"/>
    <property type="match status" value="1"/>
</dbReference>
<dbReference type="PANTHER" id="PTHR11693">
    <property type="entry name" value="ATP SYNTHASE GAMMA CHAIN"/>
    <property type="match status" value="1"/>
</dbReference>
<dbReference type="PANTHER" id="PTHR11693:SF22">
    <property type="entry name" value="ATP SYNTHASE SUBUNIT GAMMA, MITOCHONDRIAL"/>
    <property type="match status" value="1"/>
</dbReference>
<dbReference type="Pfam" id="PF00231">
    <property type="entry name" value="ATP-synt"/>
    <property type="match status" value="1"/>
</dbReference>
<dbReference type="PRINTS" id="PR00126">
    <property type="entry name" value="ATPASEGAMMA"/>
</dbReference>
<dbReference type="SUPFAM" id="SSF52943">
    <property type="entry name" value="ATP synthase (F1-ATPase), gamma subunit"/>
    <property type="match status" value="1"/>
</dbReference>
<dbReference type="PROSITE" id="PS00153">
    <property type="entry name" value="ATPASE_GAMMA"/>
    <property type="match status" value="1"/>
</dbReference>
<sequence>MAGAKEIRNKIASVKNTQKITGAMEMVAASKMRKAQERMAYSRPYAVTMRKVIGHIALGNLEYKHSYLIEREVKRVGYIIVSTDRGLCGGLNINLFKSALVSMKEWKEQGVEVSTALIGSKAANFFERFGGKALAQVSGMGDAPSIGDLIGSVKVMLQAYDNGEIDRLYLVYNKFVNTMVQTPTVDQMLPLPKADDQALAKRHWDYLYEPDPKHLLNELLIRYVESQVYQGVVENLASEQAARMVAMKAATDNAGDLIGDLQLVYNKARQASITQELTEIVSGASAV</sequence>
<feature type="chain" id="PRO_1000213049" description="ATP synthase gamma chain">
    <location>
        <begin position="1"/>
        <end position="287"/>
    </location>
</feature>
<accession>C4LDW1</accession>
<proteinExistence type="inferred from homology"/>